<accession>A8YYS2</accession>
<dbReference type="EC" id="3.1.26.5" evidence="1"/>
<dbReference type="EMBL" id="CP000730">
    <property type="protein sequence ID" value="ABX30702.1"/>
    <property type="molecule type" value="Genomic_DNA"/>
</dbReference>
<dbReference type="RefSeq" id="WP_001789343.1">
    <property type="nucleotide sequence ID" value="NC_010079.1"/>
</dbReference>
<dbReference type="SMR" id="A8YYS2"/>
<dbReference type="KEGG" id="sax:USA300HOU_2716"/>
<dbReference type="HOGENOM" id="CLU_117179_9_1_9"/>
<dbReference type="GO" id="GO:0030677">
    <property type="term" value="C:ribonuclease P complex"/>
    <property type="evidence" value="ECO:0007669"/>
    <property type="project" value="TreeGrafter"/>
</dbReference>
<dbReference type="GO" id="GO:0042781">
    <property type="term" value="F:3'-tRNA processing endoribonuclease activity"/>
    <property type="evidence" value="ECO:0007669"/>
    <property type="project" value="TreeGrafter"/>
</dbReference>
<dbReference type="GO" id="GO:0004526">
    <property type="term" value="F:ribonuclease P activity"/>
    <property type="evidence" value="ECO:0007669"/>
    <property type="project" value="UniProtKB-UniRule"/>
</dbReference>
<dbReference type="GO" id="GO:0000049">
    <property type="term" value="F:tRNA binding"/>
    <property type="evidence" value="ECO:0007669"/>
    <property type="project" value="UniProtKB-UniRule"/>
</dbReference>
<dbReference type="GO" id="GO:0001682">
    <property type="term" value="P:tRNA 5'-leader removal"/>
    <property type="evidence" value="ECO:0007669"/>
    <property type="project" value="UniProtKB-UniRule"/>
</dbReference>
<dbReference type="FunFam" id="3.30.230.10:FF:000021">
    <property type="entry name" value="Ribonuclease P protein component"/>
    <property type="match status" value="1"/>
</dbReference>
<dbReference type="Gene3D" id="3.30.230.10">
    <property type="match status" value="1"/>
</dbReference>
<dbReference type="HAMAP" id="MF_00227">
    <property type="entry name" value="RNase_P"/>
    <property type="match status" value="1"/>
</dbReference>
<dbReference type="InterPro" id="IPR020568">
    <property type="entry name" value="Ribosomal_Su5_D2-typ_SF"/>
</dbReference>
<dbReference type="InterPro" id="IPR014721">
    <property type="entry name" value="Ribsml_uS5_D2-typ_fold_subgr"/>
</dbReference>
<dbReference type="InterPro" id="IPR000100">
    <property type="entry name" value="RNase_P"/>
</dbReference>
<dbReference type="InterPro" id="IPR020539">
    <property type="entry name" value="RNase_P_CS"/>
</dbReference>
<dbReference type="NCBIfam" id="TIGR00188">
    <property type="entry name" value="rnpA"/>
    <property type="match status" value="1"/>
</dbReference>
<dbReference type="PANTHER" id="PTHR33992">
    <property type="entry name" value="RIBONUCLEASE P PROTEIN COMPONENT"/>
    <property type="match status" value="1"/>
</dbReference>
<dbReference type="PANTHER" id="PTHR33992:SF1">
    <property type="entry name" value="RIBONUCLEASE P PROTEIN COMPONENT"/>
    <property type="match status" value="1"/>
</dbReference>
<dbReference type="Pfam" id="PF00825">
    <property type="entry name" value="Ribonuclease_P"/>
    <property type="match status" value="1"/>
</dbReference>
<dbReference type="SUPFAM" id="SSF54211">
    <property type="entry name" value="Ribosomal protein S5 domain 2-like"/>
    <property type="match status" value="1"/>
</dbReference>
<dbReference type="PROSITE" id="PS00648">
    <property type="entry name" value="RIBONUCLEASE_P"/>
    <property type="match status" value="1"/>
</dbReference>
<organism>
    <name type="scientific">Staphylococcus aureus (strain USA300 / TCH1516)</name>
    <dbReference type="NCBI Taxonomy" id="451516"/>
    <lineage>
        <taxon>Bacteria</taxon>
        <taxon>Bacillati</taxon>
        <taxon>Bacillota</taxon>
        <taxon>Bacilli</taxon>
        <taxon>Bacillales</taxon>
        <taxon>Staphylococcaceae</taxon>
        <taxon>Staphylococcus</taxon>
    </lineage>
</organism>
<gene>
    <name evidence="1" type="primary">rnpA</name>
    <name type="ordered locus">USA300HOU_2716</name>
</gene>
<name>RNPA_STAAT</name>
<sequence>MLLEKAYRIKKNADFQRIYKKGHSVANRQFVVYTCNNKEIDHFRLGISVSKKLGNAVLRNKIKRAIRENFKVHKSHILAKDIIVIARQPAKDMTTLQIQNSLEHVLKIAKVFNKKIK</sequence>
<feature type="chain" id="PRO_1000078211" description="Ribonuclease P protein component">
    <location>
        <begin position="1"/>
        <end position="117"/>
    </location>
</feature>
<comment type="function">
    <text evidence="1">RNaseP catalyzes the removal of the 5'-leader sequence from pre-tRNA to produce the mature 5'-terminus. It can also cleave other RNA substrates such as 4.5S RNA. The protein component plays an auxiliary but essential role in vivo by binding to the 5'-leader sequence and broadening the substrate specificity of the ribozyme.</text>
</comment>
<comment type="catalytic activity">
    <reaction evidence="1">
        <text>Endonucleolytic cleavage of RNA, removing 5'-extranucleotides from tRNA precursor.</text>
        <dbReference type="EC" id="3.1.26.5"/>
    </reaction>
</comment>
<comment type="subunit">
    <text evidence="1">Consists of a catalytic RNA component (M1 or rnpB) and a protein subunit.</text>
</comment>
<comment type="similarity">
    <text evidence="1">Belongs to the RnpA family.</text>
</comment>
<proteinExistence type="inferred from homology"/>
<reference key="1">
    <citation type="journal article" date="2007" name="BMC Microbiol.">
        <title>Subtle genetic changes enhance virulence of methicillin resistant and sensitive Staphylococcus aureus.</title>
        <authorList>
            <person name="Highlander S.K."/>
            <person name="Hulten K.G."/>
            <person name="Qin X."/>
            <person name="Jiang H."/>
            <person name="Yerrapragada S."/>
            <person name="Mason E.O. Jr."/>
            <person name="Shang Y."/>
            <person name="Williams T.M."/>
            <person name="Fortunov R.M."/>
            <person name="Liu Y."/>
            <person name="Igboeli O."/>
            <person name="Petrosino J."/>
            <person name="Tirumalai M."/>
            <person name="Uzman A."/>
            <person name="Fox G.E."/>
            <person name="Cardenas A.M."/>
            <person name="Muzny D.M."/>
            <person name="Hemphill L."/>
            <person name="Ding Y."/>
            <person name="Dugan S."/>
            <person name="Blyth P.R."/>
            <person name="Buhay C.J."/>
            <person name="Dinh H.H."/>
            <person name="Hawes A.C."/>
            <person name="Holder M."/>
            <person name="Kovar C.L."/>
            <person name="Lee S.L."/>
            <person name="Liu W."/>
            <person name="Nazareth L.V."/>
            <person name="Wang Q."/>
            <person name="Zhou J."/>
            <person name="Kaplan S.L."/>
            <person name="Weinstock G.M."/>
        </authorList>
    </citation>
    <scope>NUCLEOTIDE SEQUENCE [LARGE SCALE GENOMIC DNA]</scope>
    <source>
        <strain>USA300 / TCH1516</strain>
    </source>
</reference>
<protein>
    <recommendedName>
        <fullName evidence="1">Ribonuclease P protein component</fullName>
        <shortName evidence="1">RNase P protein</shortName>
        <shortName evidence="1">RNaseP protein</shortName>
        <ecNumber evidence="1">3.1.26.5</ecNumber>
    </recommendedName>
    <alternativeName>
        <fullName evidence="1">Protein C5</fullName>
    </alternativeName>
</protein>
<evidence type="ECO:0000255" key="1">
    <source>
        <dbReference type="HAMAP-Rule" id="MF_00227"/>
    </source>
</evidence>
<keyword id="KW-0255">Endonuclease</keyword>
<keyword id="KW-0378">Hydrolase</keyword>
<keyword id="KW-0540">Nuclease</keyword>
<keyword id="KW-0694">RNA-binding</keyword>
<keyword id="KW-0819">tRNA processing</keyword>